<keyword id="KW-1185">Reference proteome</keyword>
<organism>
    <name type="scientific">Paraburkholderia phymatum (strain DSM 17167 / CIP 108236 / LMG 21445 / STM815)</name>
    <name type="common">Burkholderia phymatum</name>
    <dbReference type="NCBI Taxonomy" id="391038"/>
    <lineage>
        <taxon>Bacteria</taxon>
        <taxon>Pseudomonadati</taxon>
        <taxon>Pseudomonadota</taxon>
        <taxon>Betaproteobacteria</taxon>
        <taxon>Burkholderiales</taxon>
        <taxon>Burkholderiaceae</taxon>
        <taxon>Paraburkholderia</taxon>
    </lineage>
</organism>
<name>Y5360_PARP8</name>
<accession>B2JND6</accession>
<dbReference type="EMBL" id="CP001044">
    <property type="protein sequence ID" value="ACC74438.1"/>
    <property type="molecule type" value="Genomic_DNA"/>
</dbReference>
<dbReference type="RefSeq" id="WP_012404602.1">
    <property type="nucleotide sequence ID" value="NC_010623.1"/>
</dbReference>
<dbReference type="SMR" id="B2JND6"/>
<dbReference type="STRING" id="391038.Bphy_5360"/>
<dbReference type="KEGG" id="bph:Bphy_5360"/>
<dbReference type="eggNOG" id="COG3132">
    <property type="taxonomic scope" value="Bacteria"/>
</dbReference>
<dbReference type="HOGENOM" id="CLU_057831_0_0_4"/>
<dbReference type="OrthoDB" id="9784785at2"/>
<dbReference type="Proteomes" id="UP000001192">
    <property type="component" value="Chromosome 2"/>
</dbReference>
<dbReference type="Gene3D" id="1.10.10.10">
    <property type="entry name" value="Winged helix-like DNA-binding domain superfamily/Winged helix DNA-binding domain"/>
    <property type="match status" value="2"/>
</dbReference>
<dbReference type="HAMAP" id="MF_01584">
    <property type="entry name" value="UPF0502"/>
    <property type="match status" value="1"/>
</dbReference>
<dbReference type="InterPro" id="IPR007432">
    <property type="entry name" value="DUF480"/>
</dbReference>
<dbReference type="InterPro" id="IPR036388">
    <property type="entry name" value="WH-like_DNA-bd_sf"/>
</dbReference>
<dbReference type="InterPro" id="IPR036390">
    <property type="entry name" value="WH_DNA-bd_sf"/>
</dbReference>
<dbReference type="PANTHER" id="PTHR38768">
    <property type="entry name" value="UPF0502 PROTEIN YCEH"/>
    <property type="match status" value="1"/>
</dbReference>
<dbReference type="PANTHER" id="PTHR38768:SF1">
    <property type="entry name" value="UPF0502 PROTEIN YCEH"/>
    <property type="match status" value="1"/>
</dbReference>
<dbReference type="Pfam" id="PF04337">
    <property type="entry name" value="DUF480"/>
    <property type="match status" value="1"/>
</dbReference>
<dbReference type="SUPFAM" id="SSF46785">
    <property type="entry name" value="Winged helix' DNA-binding domain"/>
    <property type="match status" value="2"/>
</dbReference>
<protein>
    <recommendedName>
        <fullName evidence="1">UPF0502 protein Bphy_5360</fullName>
    </recommendedName>
</protein>
<feature type="chain" id="PRO_1000201236" description="UPF0502 protein Bphy_5360">
    <location>
        <begin position="1"/>
        <end position="234"/>
    </location>
</feature>
<proteinExistence type="inferred from homology"/>
<reference key="1">
    <citation type="journal article" date="2014" name="Stand. Genomic Sci.">
        <title>Complete genome sequence of Burkholderia phymatum STM815(T), a broad host range and efficient nitrogen-fixing symbiont of Mimosa species.</title>
        <authorList>
            <person name="Moulin L."/>
            <person name="Klonowska A."/>
            <person name="Caroline B."/>
            <person name="Booth K."/>
            <person name="Vriezen J.A."/>
            <person name="Melkonian R."/>
            <person name="James E.K."/>
            <person name="Young J.P."/>
            <person name="Bena G."/>
            <person name="Hauser L."/>
            <person name="Land M."/>
            <person name="Kyrpides N."/>
            <person name="Bruce D."/>
            <person name="Chain P."/>
            <person name="Copeland A."/>
            <person name="Pitluck S."/>
            <person name="Woyke T."/>
            <person name="Lizotte-Waniewski M."/>
            <person name="Bristow J."/>
            <person name="Riley M."/>
        </authorList>
    </citation>
    <scope>NUCLEOTIDE SEQUENCE [LARGE SCALE GENOMIC DNA]</scope>
    <source>
        <strain>DSM 17167 / CIP 108236 / LMG 21445 / STM815</strain>
    </source>
</reference>
<evidence type="ECO:0000255" key="1">
    <source>
        <dbReference type="HAMAP-Rule" id="MF_01584"/>
    </source>
</evidence>
<comment type="similarity">
    <text evidence="1">Belongs to the UPF0502 family.</text>
</comment>
<sequence length="234" mass="25586">MNSTSDDNPRPALRALTPLEARVLGVLFEKQHTVPDTYPLSLNSLAAGCNQKTSRSPVMNVSESEILDAINTLKRLSLVLEGSSSRVPRYEHNIERVLGLPRQSAALLTALLLRGPQTAAELRLATSRLHSFADTSSVEAFLEELAGNDPPRVVKLPRTPGERESRWMHLLCGEPSAEQLRGAALSDEPLPPGELEGLRAQQRELSERVERLEALVVHLAGELGVSLDDLKGRL</sequence>
<gene>
    <name type="ordered locus">Bphy_5360</name>
</gene>